<organism>
    <name type="scientific">Methylorubrum extorquens (strain PA1)</name>
    <name type="common">Methylobacterium extorquens</name>
    <dbReference type="NCBI Taxonomy" id="419610"/>
    <lineage>
        <taxon>Bacteria</taxon>
        <taxon>Pseudomonadati</taxon>
        <taxon>Pseudomonadota</taxon>
        <taxon>Alphaproteobacteria</taxon>
        <taxon>Hyphomicrobiales</taxon>
        <taxon>Methylobacteriaceae</taxon>
        <taxon>Methylorubrum</taxon>
    </lineage>
</organism>
<evidence type="ECO:0000255" key="1">
    <source>
        <dbReference type="HAMAP-Rule" id="MF_00186"/>
    </source>
</evidence>
<keyword id="KW-0067">ATP-binding</keyword>
<keyword id="KW-0319">Glycerol metabolism</keyword>
<keyword id="KW-0418">Kinase</keyword>
<keyword id="KW-0547">Nucleotide-binding</keyword>
<keyword id="KW-0808">Transferase</keyword>
<reference key="1">
    <citation type="submission" date="2007-12" db="EMBL/GenBank/DDBJ databases">
        <title>Complete sequence of Methylobacterium extorquens PA1.</title>
        <authorList>
            <consortium name="US DOE Joint Genome Institute"/>
            <person name="Copeland A."/>
            <person name="Lucas S."/>
            <person name="Lapidus A."/>
            <person name="Barry K."/>
            <person name="Glavina del Rio T."/>
            <person name="Dalin E."/>
            <person name="Tice H."/>
            <person name="Pitluck S."/>
            <person name="Saunders E."/>
            <person name="Brettin T."/>
            <person name="Bruce D."/>
            <person name="Detter J.C."/>
            <person name="Han C."/>
            <person name="Schmutz J."/>
            <person name="Larimer F."/>
            <person name="Land M."/>
            <person name="Hauser L."/>
            <person name="Kyrpides N."/>
            <person name="Kim E."/>
            <person name="Marx C."/>
            <person name="Richardson P."/>
        </authorList>
    </citation>
    <scope>NUCLEOTIDE SEQUENCE [LARGE SCALE GENOMIC DNA]</scope>
    <source>
        <strain>PA1</strain>
    </source>
</reference>
<name>GLPK_METEP</name>
<accession>A9W8T7</accession>
<dbReference type="EC" id="2.7.1.30" evidence="1"/>
<dbReference type="EMBL" id="CP000908">
    <property type="protein sequence ID" value="ABY32436.1"/>
    <property type="molecule type" value="Genomic_DNA"/>
</dbReference>
<dbReference type="RefSeq" id="WP_012255214.1">
    <property type="nucleotide sequence ID" value="NC_010172.1"/>
</dbReference>
<dbReference type="SMR" id="A9W8T7"/>
<dbReference type="KEGG" id="mex:Mext_4066"/>
<dbReference type="eggNOG" id="COG0554">
    <property type="taxonomic scope" value="Bacteria"/>
</dbReference>
<dbReference type="HOGENOM" id="CLU_009281_2_3_5"/>
<dbReference type="BioCyc" id="MEXT419610:MEXT_RS20420-MONOMER"/>
<dbReference type="UniPathway" id="UPA00618">
    <property type="reaction ID" value="UER00672"/>
</dbReference>
<dbReference type="GO" id="GO:0005829">
    <property type="term" value="C:cytosol"/>
    <property type="evidence" value="ECO:0007669"/>
    <property type="project" value="TreeGrafter"/>
</dbReference>
<dbReference type="GO" id="GO:0005524">
    <property type="term" value="F:ATP binding"/>
    <property type="evidence" value="ECO:0007669"/>
    <property type="project" value="UniProtKB-UniRule"/>
</dbReference>
<dbReference type="GO" id="GO:0004370">
    <property type="term" value="F:glycerol kinase activity"/>
    <property type="evidence" value="ECO:0000250"/>
    <property type="project" value="UniProtKB"/>
</dbReference>
<dbReference type="GO" id="GO:0019563">
    <property type="term" value="P:glycerol catabolic process"/>
    <property type="evidence" value="ECO:0007669"/>
    <property type="project" value="UniProtKB-UniRule"/>
</dbReference>
<dbReference type="GO" id="GO:0006071">
    <property type="term" value="P:glycerol metabolic process"/>
    <property type="evidence" value="ECO:0000250"/>
    <property type="project" value="UniProtKB"/>
</dbReference>
<dbReference type="GO" id="GO:0006072">
    <property type="term" value="P:glycerol-3-phosphate metabolic process"/>
    <property type="evidence" value="ECO:0007669"/>
    <property type="project" value="InterPro"/>
</dbReference>
<dbReference type="CDD" id="cd07769">
    <property type="entry name" value="ASKHA_NBD_FGGY_GK"/>
    <property type="match status" value="1"/>
</dbReference>
<dbReference type="FunFam" id="3.30.420.40:FF:000007">
    <property type="entry name" value="Glycerol kinase"/>
    <property type="match status" value="1"/>
</dbReference>
<dbReference type="FunFam" id="3.30.420.40:FF:000008">
    <property type="entry name" value="Glycerol kinase"/>
    <property type="match status" value="1"/>
</dbReference>
<dbReference type="Gene3D" id="3.30.420.40">
    <property type="match status" value="2"/>
</dbReference>
<dbReference type="HAMAP" id="MF_00186">
    <property type="entry name" value="Glycerol_kin"/>
    <property type="match status" value="1"/>
</dbReference>
<dbReference type="InterPro" id="IPR043129">
    <property type="entry name" value="ATPase_NBD"/>
</dbReference>
<dbReference type="InterPro" id="IPR000577">
    <property type="entry name" value="Carb_kinase_FGGY"/>
</dbReference>
<dbReference type="InterPro" id="IPR018483">
    <property type="entry name" value="Carb_kinase_FGGY_CS"/>
</dbReference>
<dbReference type="InterPro" id="IPR018485">
    <property type="entry name" value="FGGY_C"/>
</dbReference>
<dbReference type="InterPro" id="IPR018484">
    <property type="entry name" value="FGGY_N"/>
</dbReference>
<dbReference type="InterPro" id="IPR005999">
    <property type="entry name" value="Glycerol_kin"/>
</dbReference>
<dbReference type="NCBIfam" id="TIGR01311">
    <property type="entry name" value="glycerol_kin"/>
    <property type="match status" value="1"/>
</dbReference>
<dbReference type="NCBIfam" id="NF000756">
    <property type="entry name" value="PRK00047.1"/>
    <property type="match status" value="1"/>
</dbReference>
<dbReference type="PANTHER" id="PTHR10196:SF69">
    <property type="entry name" value="GLYCEROL KINASE"/>
    <property type="match status" value="1"/>
</dbReference>
<dbReference type="PANTHER" id="PTHR10196">
    <property type="entry name" value="SUGAR KINASE"/>
    <property type="match status" value="1"/>
</dbReference>
<dbReference type="Pfam" id="PF02782">
    <property type="entry name" value="FGGY_C"/>
    <property type="match status" value="1"/>
</dbReference>
<dbReference type="Pfam" id="PF00370">
    <property type="entry name" value="FGGY_N"/>
    <property type="match status" value="1"/>
</dbReference>
<dbReference type="PIRSF" id="PIRSF000538">
    <property type="entry name" value="GlpK"/>
    <property type="match status" value="1"/>
</dbReference>
<dbReference type="SUPFAM" id="SSF53067">
    <property type="entry name" value="Actin-like ATPase domain"/>
    <property type="match status" value="2"/>
</dbReference>
<dbReference type="PROSITE" id="PS00933">
    <property type="entry name" value="FGGY_KINASES_1"/>
    <property type="match status" value="1"/>
</dbReference>
<feature type="chain" id="PRO_1000098742" description="Glycerol kinase">
    <location>
        <begin position="1"/>
        <end position="501"/>
    </location>
</feature>
<feature type="binding site" evidence="1">
    <location>
        <position position="12"/>
    </location>
    <ligand>
        <name>ADP</name>
        <dbReference type="ChEBI" id="CHEBI:456216"/>
    </ligand>
</feature>
<feature type="binding site" evidence="1">
    <location>
        <position position="12"/>
    </location>
    <ligand>
        <name>ATP</name>
        <dbReference type="ChEBI" id="CHEBI:30616"/>
    </ligand>
</feature>
<feature type="binding site" evidence="1">
    <location>
        <position position="12"/>
    </location>
    <ligand>
        <name>sn-glycerol 3-phosphate</name>
        <dbReference type="ChEBI" id="CHEBI:57597"/>
    </ligand>
</feature>
<feature type="binding site" evidence="1">
    <location>
        <position position="13"/>
    </location>
    <ligand>
        <name>ATP</name>
        <dbReference type="ChEBI" id="CHEBI:30616"/>
    </ligand>
</feature>
<feature type="binding site" evidence="1">
    <location>
        <position position="14"/>
    </location>
    <ligand>
        <name>ATP</name>
        <dbReference type="ChEBI" id="CHEBI:30616"/>
    </ligand>
</feature>
<feature type="binding site" evidence="1">
    <location>
        <position position="16"/>
    </location>
    <ligand>
        <name>ADP</name>
        <dbReference type="ChEBI" id="CHEBI:456216"/>
    </ligand>
</feature>
<feature type="binding site" evidence="1">
    <location>
        <position position="82"/>
    </location>
    <ligand>
        <name>glycerol</name>
        <dbReference type="ChEBI" id="CHEBI:17754"/>
    </ligand>
</feature>
<feature type="binding site" evidence="1">
    <location>
        <position position="82"/>
    </location>
    <ligand>
        <name>sn-glycerol 3-phosphate</name>
        <dbReference type="ChEBI" id="CHEBI:57597"/>
    </ligand>
</feature>
<feature type="binding site" evidence="1">
    <location>
        <position position="83"/>
    </location>
    <ligand>
        <name>glycerol</name>
        <dbReference type="ChEBI" id="CHEBI:17754"/>
    </ligand>
</feature>
<feature type="binding site" evidence="1">
    <location>
        <position position="83"/>
    </location>
    <ligand>
        <name>sn-glycerol 3-phosphate</name>
        <dbReference type="ChEBI" id="CHEBI:57597"/>
    </ligand>
</feature>
<feature type="binding site" evidence="1">
    <location>
        <position position="134"/>
    </location>
    <ligand>
        <name>glycerol</name>
        <dbReference type="ChEBI" id="CHEBI:17754"/>
    </ligand>
</feature>
<feature type="binding site" evidence="1">
    <location>
        <position position="134"/>
    </location>
    <ligand>
        <name>sn-glycerol 3-phosphate</name>
        <dbReference type="ChEBI" id="CHEBI:57597"/>
    </ligand>
</feature>
<feature type="binding site" evidence="1">
    <location>
        <position position="244"/>
    </location>
    <ligand>
        <name>glycerol</name>
        <dbReference type="ChEBI" id="CHEBI:17754"/>
    </ligand>
</feature>
<feature type="binding site" evidence="1">
    <location>
        <position position="244"/>
    </location>
    <ligand>
        <name>sn-glycerol 3-phosphate</name>
        <dbReference type="ChEBI" id="CHEBI:57597"/>
    </ligand>
</feature>
<feature type="binding site" evidence="1">
    <location>
        <position position="245"/>
    </location>
    <ligand>
        <name>glycerol</name>
        <dbReference type="ChEBI" id="CHEBI:17754"/>
    </ligand>
</feature>
<feature type="binding site" evidence="1">
    <location>
        <position position="266"/>
    </location>
    <ligand>
        <name>ADP</name>
        <dbReference type="ChEBI" id="CHEBI:456216"/>
    </ligand>
</feature>
<feature type="binding site" evidence="1">
    <location>
        <position position="266"/>
    </location>
    <ligand>
        <name>ATP</name>
        <dbReference type="ChEBI" id="CHEBI:30616"/>
    </ligand>
</feature>
<feature type="binding site" evidence="1">
    <location>
        <position position="310"/>
    </location>
    <ligand>
        <name>ADP</name>
        <dbReference type="ChEBI" id="CHEBI:456216"/>
    </ligand>
</feature>
<feature type="binding site" evidence="1">
    <location>
        <position position="310"/>
    </location>
    <ligand>
        <name>ATP</name>
        <dbReference type="ChEBI" id="CHEBI:30616"/>
    </ligand>
</feature>
<feature type="binding site" evidence="1">
    <location>
        <position position="314"/>
    </location>
    <ligand>
        <name>ATP</name>
        <dbReference type="ChEBI" id="CHEBI:30616"/>
    </ligand>
</feature>
<feature type="binding site" evidence="1">
    <location>
        <position position="411"/>
    </location>
    <ligand>
        <name>ADP</name>
        <dbReference type="ChEBI" id="CHEBI:456216"/>
    </ligand>
</feature>
<feature type="binding site" evidence="1">
    <location>
        <position position="411"/>
    </location>
    <ligand>
        <name>ATP</name>
        <dbReference type="ChEBI" id="CHEBI:30616"/>
    </ligand>
</feature>
<feature type="binding site" evidence="1">
    <location>
        <position position="415"/>
    </location>
    <ligand>
        <name>ADP</name>
        <dbReference type="ChEBI" id="CHEBI:456216"/>
    </ligand>
</feature>
<gene>
    <name evidence="1" type="primary">glpK</name>
    <name type="ordered locus">Mext_4066</name>
</gene>
<sequence>MPDAVGAIDQGTTSTRFIVFDRRGTILAQAQREHEQIFPRPGWVEHDPREIWRNTHAVMREGLARAGLAPEDLAAIGITNQRETAVLWDRRTGEPLHDAIVWQDTRTDRSVAALARDGGRDRFRAVTGLPLASYFSASKLAWLLDHVEGARAKAEDGTALFGTIDSWLVWNLTGGPDGGLHVTDVTNASRTQLMSLATLDWDEAMLGVFRIPRAVLPTIVSSSAVLGEARDPFPGVPLGGILGDQQAALFGQTCFSAGEAKNTYGTGCFALMNTGPAPVASSAGLITTVAYRLDGRPPAYALEGSIAITGALVQWLRDNLGLIGASSEIEGLARSVEDNGGVYVVPAFSGLYAPHWRDDARGLIIGLTRYANRGHIARACLEATAYQTREVLEAMERDSGCPIAELRCDGGMTVNDLLMQFQADILDRPTLRPKVSETTALGAAYAAGLATGFWKTLEDLRDNWAVDKRWHPHIQAEERRALFAGWSRAVERSFGWVEENA</sequence>
<comment type="function">
    <text evidence="1">Key enzyme in the regulation of glycerol uptake and metabolism. Catalyzes the phosphorylation of glycerol to yield sn-glycerol 3-phosphate.</text>
</comment>
<comment type="catalytic activity">
    <reaction evidence="1">
        <text>glycerol + ATP = sn-glycerol 3-phosphate + ADP + H(+)</text>
        <dbReference type="Rhea" id="RHEA:21644"/>
        <dbReference type="ChEBI" id="CHEBI:15378"/>
        <dbReference type="ChEBI" id="CHEBI:17754"/>
        <dbReference type="ChEBI" id="CHEBI:30616"/>
        <dbReference type="ChEBI" id="CHEBI:57597"/>
        <dbReference type="ChEBI" id="CHEBI:456216"/>
        <dbReference type="EC" id="2.7.1.30"/>
    </reaction>
</comment>
<comment type="activity regulation">
    <text evidence="1">Inhibited by fructose 1,6-bisphosphate (FBP).</text>
</comment>
<comment type="pathway">
    <text evidence="1">Polyol metabolism; glycerol degradation via glycerol kinase pathway; sn-glycerol 3-phosphate from glycerol: step 1/1.</text>
</comment>
<comment type="similarity">
    <text evidence="1">Belongs to the FGGY kinase family.</text>
</comment>
<protein>
    <recommendedName>
        <fullName evidence="1">Glycerol kinase</fullName>
        <ecNumber evidence="1">2.7.1.30</ecNumber>
    </recommendedName>
    <alternativeName>
        <fullName evidence="1">ATP:glycerol 3-phosphotransferase</fullName>
    </alternativeName>
    <alternativeName>
        <fullName evidence="1">Glycerokinase</fullName>
        <shortName evidence="1">GK</shortName>
    </alternativeName>
</protein>
<proteinExistence type="inferred from homology"/>